<feature type="chain" id="PRO_1000000561" description="DNA primase DnaG">
    <location>
        <begin position="1"/>
        <end position="408"/>
    </location>
</feature>
<feature type="domain" description="Toprim" evidence="1">
    <location>
        <begin position="171"/>
        <end position="250"/>
    </location>
</feature>
<feature type="region of interest" description="Disordered" evidence="2">
    <location>
        <begin position="276"/>
        <end position="323"/>
    </location>
</feature>
<feature type="compositionally biased region" description="Low complexity" evidence="2">
    <location>
        <begin position="284"/>
        <end position="298"/>
    </location>
</feature>
<feature type="compositionally biased region" description="Basic and acidic residues" evidence="2">
    <location>
        <begin position="302"/>
        <end position="314"/>
    </location>
</feature>
<feature type="binding site" evidence="1">
    <location>
        <position position="177"/>
    </location>
    <ligand>
        <name>Mg(2+)</name>
        <dbReference type="ChEBI" id="CHEBI:18420"/>
        <label>1</label>
        <note>catalytic</note>
    </ligand>
</feature>
<feature type="binding site" evidence="1">
    <location>
        <position position="219"/>
    </location>
    <ligand>
        <name>Mg(2+)</name>
        <dbReference type="ChEBI" id="CHEBI:18420"/>
        <label>1</label>
        <note>catalytic</note>
    </ligand>
</feature>
<feature type="binding site" evidence="1">
    <location>
        <position position="219"/>
    </location>
    <ligand>
        <name>Mg(2+)</name>
        <dbReference type="ChEBI" id="CHEBI:18420"/>
        <label>2</label>
    </ligand>
</feature>
<feature type="binding site" evidence="1">
    <location>
        <position position="221"/>
    </location>
    <ligand>
        <name>Mg(2+)</name>
        <dbReference type="ChEBI" id="CHEBI:18420"/>
        <label>2</label>
    </ligand>
</feature>
<keyword id="KW-0235">DNA replication</keyword>
<keyword id="KW-0240">DNA-directed RNA polymerase</keyword>
<keyword id="KW-0460">Magnesium</keyword>
<keyword id="KW-0479">Metal-binding</keyword>
<keyword id="KW-0548">Nucleotidyltransferase</keyword>
<keyword id="KW-0639">Primosome</keyword>
<keyword id="KW-0804">Transcription</keyword>
<keyword id="KW-0808">Transferase</keyword>
<gene>
    <name evidence="1" type="primary">dnaG</name>
    <name type="ordered locus">Memar_1017</name>
</gene>
<dbReference type="EC" id="2.7.7.101" evidence="1"/>
<dbReference type="EMBL" id="CP000562">
    <property type="protein sequence ID" value="ABN56950.1"/>
    <property type="molecule type" value="Genomic_DNA"/>
</dbReference>
<dbReference type="RefSeq" id="WP_011843861.1">
    <property type="nucleotide sequence ID" value="NC_009051.1"/>
</dbReference>
<dbReference type="SMR" id="A3CUA0"/>
<dbReference type="STRING" id="368407.Memar_1017"/>
<dbReference type="GeneID" id="4847012"/>
<dbReference type="GeneID" id="76731588"/>
<dbReference type="KEGG" id="mem:Memar_1017"/>
<dbReference type="eggNOG" id="arCOG04281">
    <property type="taxonomic scope" value="Archaea"/>
</dbReference>
<dbReference type="HOGENOM" id="CLU_034626_0_0_2"/>
<dbReference type="OrthoDB" id="8643at2157"/>
<dbReference type="Proteomes" id="UP000002146">
    <property type="component" value="Chromosome"/>
</dbReference>
<dbReference type="GO" id="GO:0005737">
    <property type="term" value="C:cytoplasm"/>
    <property type="evidence" value="ECO:0007669"/>
    <property type="project" value="TreeGrafter"/>
</dbReference>
<dbReference type="GO" id="GO:0000428">
    <property type="term" value="C:DNA-directed RNA polymerase complex"/>
    <property type="evidence" value="ECO:0007669"/>
    <property type="project" value="UniProtKB-KW"/>
</dbReference>
<dbReference type="GO" id="GO:0000178">
    <property type="term" value="C:exosome (RNase complex)"/>
    <property type="evidence" value="ECO:0007669"/>
    <property type="project" value="InterPro"/>
</dbReference>
<dbReference type="GO" id="GO:1990077">
    <property type="term" value="C:primosome complex"/>
    <property type="evidence" value="ECO:0007669"/>
    <property type="project" value="UniProtKB-KW"/>
</dbReference>
<dbReference type="GO" id="GO:0003899">
    <property type="term" value="F:DNA-directed RNA polymerase activity"/>
    <property type="evidence" value="ECO:0007669"/>
    <property type="project" value="InterPro"/>
</dbReference>
<dbReference type="GO" id="GO:0046872">
    <property type="term" value="F:metal ion binding"/>
    <property type="evidence" value="ECO:0007669"/>
    <property type="project" value="UniProtKB-KW"/>
</dbReference>
<dbReference type="GO" id="GO:0008143">
    <property type="term" value="F:poly(A) binding"/>
    <property type="evidence" value="ECO:0007669"/>
    <property type="project" value="InterPro"/>
</dbReference>
<dbReference type="GO" id="GO:0006269">
    <property type="term" value="P:DNA replication, synthesis of primer"/>
    <property type="evidence" value="ECO:0007669"/>
    <property type="project" value="UniProtKB-UniRule"/>
</dbReference>
<dbReference type="CDD" id="cd01029">
    <property type="entry name" value="TOPRIM_primases"/>
    <property type="match status" value="1"/>
</dbReference>
<dbReference type="Gene3D" id="3.40.1360.10">
    <property type="match status" value="1"/>
</dbReference>
<dbReference type="HAMAP" id="MF_00007">
    <property type="entry name" value="DNA_primase_DnaG_arc"/>
    <property type="match status" value="1"/>
</dbReference>
<dbReference type="InterPro" id="IPR050219">
    <property type="entry name" value="DnaG_primase"/>
</dbReference>
<dbReference type="InterPro" id="IPR020607">
    <property type="entry name" value="Primase_DnaG_arc"/>
</dbReference>
<dbReference type="InterPro" id="IPR034154">
    <property type="entry name" value="TOPRIM_DnaG/twinkle"/>
</dbReference>
<dbReference type="InterPro" id="IPR006171">
    <property type="entry name" value="TOPRIM_dom"/>
</dbReference>
<dbReference type="NCBIfam" id="NF003108">
    <property type="entry name" value="PRK04031.1-1"/>
    <property type="match status" value="1"/>
</dbReference>
<dbReference type="PANTHER" id="PTHR30313">
    <property type="entry name" value="DNA PRIMASE"/>
    <property type="match status" value="1"/>
</dbReference>
<dbReference type="PANTHER" id="PTHR30313:SF2">
    <property type="entry name" value="DNA PRIMASE"/>
    <property type="match status" value="1"/>
</dbReference>
<dbReference type="Pfam" id="PF13662">
    <property type="entry name" value="Toprim_4"/>
    <property type="match status" value="1"/>
</dbReference>
<dbReference type="SMART" id="SM00493">
    <property type="entry name" value="TOPRIM"/>
    <property type="match status" value="1"/>
</dbReference>
<dbReference type="SUPFAM" id="SSF56731">
    <property type="entry name" value="DNA primase core"/>
    <property type="match status" value="1"/>
</dbReference>
<dbReference type="PROSITE" id="PS50880">
    <property type="entry name" value="TOPRIM"/>
    <property type="match status" value="1"/>
</dbReference>
<evidence type="ECO:0000255" key="1">
    <source>
        <dbReference type="HAMAP-Rule" id="MF_00007"/>
    </source>
</evidence>
<evidence type="ECO:0000256" key="2">
    <source>
        <dbReference type="SAM" id="MobiDB-lite"/>
    </source>
</evidence>
<accession>A3CUA0</accession>
<protein>
    <recommendedName>
        <fullName evidence="1">DNA primase DnaG</fullName>
        <ecNumber evidence="1">2.7.7.101</ecNumber>
    </recommendedName>
</protein>
<name>DNAG_METMJ</name>
<comment type="function">
    <text evidence="1">RNA polymerase that catalyzes the synthesis of short RNA molecules used as primers for DNA polymerase during DNA replication.</text>
</comment>
<comment type="catalytic activity">
    <reaction evidence="1">
        <text>ssDNA + n NTP = ssDNA/pppN(pN)n-1 hybrid + (n-1) diphosphate.</text>
        <dbReference type="EC" id="2.7.7.101"/>
    </reaction>
</comment>
<comment type="cofactor">
    <cofactor evidence="1">
        <name>Mg(2+)</name>
        <dbReference type="ChEBI" id="CHEBI:18420"/>
    </cofactor>
    <text evidence="1">Binds two Mg(2+) per subunit.</text>
</comment>
<comment type="subunit">
    <text evidence="1">Forms a ternary complex with MCM helicase and DNA.</text>
</comment>
<comment type="similarity">
    <text evidence="1">Belongs to the archaeal DnaG primase family.</text>
</comment>
<organism>
    <name type="scientific">Methanoculleus marisnigri (strain ATCC 35101 / DSM 1498 / JR1)</name>
    <dbReference type="NCBI Taxonomy" id="368407"/>
    <lineage>
        <taxon>Archaea</taxon>
        <taxon>Methanobacteriati</taxon>
        <taxon>Methanobacteriota</taxon>
        <taxon>Stenosarchaea group</taxon>
        <taxon>Methanomicrobia</taxon>
        <taxon>Methanomicrobiales</taxon>
        <taxon>Methanomicrobiaceae</taxon>
        <taxon>Methanoculleus</taxon>
    </lineage>
</organism>
<sequence>MYSPDTTKYLIHLILQIEGVVDKPDVVGAIFGQTEGLLGEDLDLRDLQRTGRVGRIDVQITTKRGETKGVILISSSLDRAETALLASSLETIDRVGPCTAHVRVDRIEDIRVTKRRKIVERAKELLLEDFDEGSINSDDLLDEVREAIRIEKLEYLGEEKVHAGPNVIDSDAIIIVEGRADVINLLRYGIKNAVAVEGTNVPRIIIDLCSQKTATTLLDGDRGGELILRELLQVAEIDFVAYSPRGKSVEEMSRKEIVKALRNKVPAVGIIDQPPAEENVERLPPSAAPAEVRAPAGAGRTSEGERPPRREWDSKPPSTLGEHMADVRDKKIARFLSPDYTVLLESNATDVEGALQNLNGDVEGLVVDRIIDQKLLDQLGGRDIEFVAARDFKGIIKRPLSIRLIKIG</sequence>
<reference key="1">
    <citation type="journal article" date="2009" name="Stand. Genomic Sci.">
        <title>Complete genome sequence of Methanoculleus marisnigri Romesser et al. 1981 type strain JR1.</title>
        <authorList>
            <person name="Anderson I.J."/>
            <person name="Sieprawska-Lupa M."/>
            <person name="Lapidus A."/>
            <person name="Nolan M."/>
            <person name="Copeland A."/>
            <person name="Glavina Del Rio T."/>
            <person name="Tice H."/>
            <person name="Dalin E."/>
            <person name="Barry K."/>
            <person name="Saunders E."/>
            <person name="Han C."/>
            <person name="Brettin T."/>
            <person name="Detter J.C."/>
            <person name="Bruce D."/>
            <person name="Mikhailova N."/>
            <person name="Pitluck S."/>
            <person name="Hauser L."/>
            <person name="Land M."/>
            <person name="Lucas S."/>
            <person name="Richardson P."/>
            <person name="Whitman W.B."/>
            <person name="Kyrpides N.C."/>
        </authorList>
    </citation>
    <scope>NUCLEOTIDE SEQUENCE [LARGE SCALE GENOMIC DNA]</scope>
    <source>
        <strain>ATCC 35101 / DSM 1498 / JR1</strain>
    </source>
</reference>
<proteinExistence type="inferred from homology"/>